<comment type="catalytic activity">
    <reaction evidence="1">
        <text>L-glutamate + acetyl-CoA = N-acetyl-L-glutamate + CoA + H(+)</text>
        <dbReference type="Rhea" id="RHEA:24292"/>
        <dbReference type="ChEBI" id="CHEBI:15378"/>
        <dbReference type="ChEBI" id="CHEBI:29985"/>
        <dbReference type="ChEBI" id="CHEBI:44337"/>
        <dbReference type="ChEBI" id="CHEBI:57287"/>
        <dbReference type="ChEBI" id="CHEBI:57288"/>
        <dbReference type="EC" id="2.3.1.1"/>
    </reaction>
</comment>
<comment type="pathway">
    <text evidence="1">Amino-acid biosynthesis; L-arginine biosynthesis; N(2)-acetyl-L-ornithine from L-glutamate: step 1/4.</text>
</comment>
<comment type="subunit">
    <text evidence="1">Homohexamer.</text>
</comment>
<comment type="subcellular location">
    <subcellularLocation>
        <location evidence="1">Cytoplasm</location>
    </subcellularLocation>
</comment>
<comment type="similarity">
    <text evidence="1">Belongs to the acetyltransferase family. ArgA subfamily.</text>
</comment>
<name>ARGA_PHOLL</name>
<organism>
    <name type="scientific">Photorhabdus laumondii subsp. laumondii (strain DSM 15139 / CIP 105565 / TT01)</name>
    <name type="common">Photorhabdus luminescens subsp. laumondii</name>
    <dbReference type="NCBI Taxonomy" id="243265"/>
    <lineage>
        <taxon>Bacteria</taxon>
        <taxon>Pseudomonadati</taxon>
        <taxon>Pseudomonadota</taxon>
        <taxon>Gammaproteobacteria</taxon>
        <taxon>Enterobacterales</taxon>
        <taxon>Morganellaceae</taxon>
        <taxon>Photorhabdus</taxon>
    </lineage>
</organism>
<dbReference type="EC" id="2.3.1.1" evidence="1"/>
<dbReference type="EMBL" id="BX571861">
    <property type="protein sequence ID" value="CAE12939.1"/>
    <property type="molecule type" value="Genomic_DNA"/>
</dbReference>
<dbReference type="RefSeq" id="WP_011145020.1">
    <property type="nucleotide sequence ID" value="NC_005126.1"/>
</dbReference>
<dbReference type="SMR" id="Q7N8S4"/>
<dbReference type="STRING" id="243265.plu0644"/>
<dbReference type="GeneID" id="48846929"/>
<dbReference type="KEGG" id="plu:plu0644"/>
<dbReference type="eggNOG" id="COG0548">
    <property type="taxonomic scope" value="Bacteria"/>
</dbReference>
<dbReference type="eggNOG" id="COG1246">
    <property type="taxonomic scope" value="Bacteria"/>
</dbReference>
<dbReference type="HOGENOM" id="CLU_024773_0_0_6"/>
<dbReference type="OrthoDB" id="9802238at2"/>
<dbReference type="UniPathway" id="UPA00068">
    <property type="reaction ID" value="UER00106"/>
</dbReference>
<dbReference type="Proteomes" id="UP000002514">
    <property type="component" value="Chromosome"/>
</dbReference>
<dbReference type="GO" id="GO:0005737">
    <property type="term" value="C:cytoplasm"/>
    <property type="evidence" value="ECO:0007669"/>
    <property type="project" value="UniProtKB-SubCell"/>
</dbReference>
<dbReference type="GO" id="GO:0004042">
    <property type="term" value="F:L-glutamate N-acetyltransferase activity"/>
    <property type="evidence" value="ECO:0007669"/>
    <property type="project" value="UniProtKB-UniRule"/>
</dbReference>
<dbReference type="GO" id="GO:0006526">
    <property type="term" value="P:L-arginine biosynthetic process"/>
    <property type="evidence" value="ECO:0007669"/>
    <property type="project" value="UniProtKB-UniRule"/>
</dbReference>
<dbReference type="CDD" id="cd04237">
    <property type="entry name" value="AAK_NAGS-ABP"/>
    <property type="match status" value="1"/>
</dbReference>
<dbReference type="CDD" id="cd04301">
    <property type="entry name" value="NAT_SF"/>
    <property type="match status" value="1"/>
</dbReference>
<dbReference type="FunFam" id="3.40.1160.10:FF:000005">
    <property type="entry name" value="Amino-acid acetyltransferase"/>
    <property type="match status" value="1"/>
</dbReference>
<dbReference type="FunFam" id="3.40.630.30:FF:000009">
    <property type="entry name" value="Amino-acid acetyltransferase"/>
    <property type="match status" value="1"/>
</dbReference>
<dbReference type="Gene3D" id="3.40.630.30">
    <property type="match status" value="1"/>
</dbReference>
<dbReference type="Gene3D" id="3.40.1160.10">
    <property type="entry name" value="Acetylglutamate kinase-like"/>
    <property type="match status" value="1"/>
</dbReference>
<dbReference type="HAMAP" id="MF_01105">
    <property type="entry name" value="N_acetyl_glu_synth"/>
    <property type="match status" value="1"/>
</dbReference>
<dbReference type="InterPro" id="IPR036393">
    <property type="entry name" value="AceGlu_kinase-like_sf"/>
</dbReference>
<dbReference type="InterPro" id="IPR016181">
    <property type="entry name" value="Acyl_CoA_acyltransferase"/>
</dbReference>
<dbReference type="InterPro" id="IPR001048">
    <property type="entry name" value="Asp/Glu/Uridylate_kinase"/>
</dbReference>
<dbReference type="InterPro" id="IPR000182">
    <property type="entry name" value="GNAT_dom"/>
</dbReference>
<dbReference type="InterPro" id="IPR033719">
    <property type="entry name" value="NAGS_kin"/>
</dbReference>
<dbReference type="InterPro" id="IPR010167">
    <property type="entry name" value="NH2A_AcTrfase"/>
</dbReference>
<dbReference type="NCBIfam" id="TIGR01890">
    <property type="entry name" value="N-Ac-Glu-synth"/>
    <property type="match status" value="1"/>
</dbReference>
<dbReference type="NCBIfam" id="NF003641">
    <property type="entry name" value="PRK05279.1"/>
    <property type="match status" value="1"/>
</dbReference>
<dbReference type="PANTHER" id="PTHR30602">
    <property type="entry name" value="AMINO-ACID ACETYLTRANSFERASE"/>
    <property type="match status" value="1"/>
</dbReference>
<dbReference type="PANTHER" id="PTHR30602:SF12">
    <property type="entry name" value="AMINO-ACID ACETYLTRANSFERASE NAGS1, CHLOROPLASTIC-RELATED"/>
    <property type="match status" value="1"/>
</dbReference>
<dbReference type="Pfam" id="PF00696">
    <property type="entry name" value="AA_kinase"/>
    <property type="match status" value="1"/>
</dbReference>
<dbReference type="Pfam" id="PF00583">
    <property type="entry name" value="Acetyltransf_1"/>
    <property type="match status" value="1"/>
</dbReference>
<dbReference type="PIRSF" id="PIRSF000423">
    <property type="entry name" value="ArgA"/>
    <property type="match status" value="1"/>
</dbReference>
<dbReference type="SUPFAM" id="SSF55729">
    <property type="entry name" value="Acyl-CoA N-acyltransferases (Nat)"/>
    <property type="match status" value="1"/>
</dbReference>
<dbReference type="SUPFAM" id="SSF53633">
    <property type="entry name" value="Carbamate kinase-like"/>
    <property type="match status" value="1"/>
</dbReference>
<dbReference type="PROSITE" id="PS51186">
    <property type="entry name" value="GNAT"/>
    <property type="match status" value="1"/>
</dbReference>
<accession>Q7N8S4</accession>
<keyword id="KW-0012">Acyltransferase</keyword>
<keyword id="KW-0028">Amino-acid biosynthesis</keyword>
<keyword id="KW-0055">Arginine biosynthesis</keyword>
<keyword id="KW-0963">Cytoplasm</keyword>
<keyword id="KW-1185">Reference proteome</keyword>
<keyword id="KW-0808">Transferase</keyword>
<evidence type="ECO:0000255" key="1">
    <source>
        <dbReference type="HAMAP-Rule" id="MF_01105"/>
    </source>
</evidence>
<sequence length="448" mass="50356">MKERSTELVEGFRHSVPYINAHRGKTFVIMLGGEAIAHENFTNIINDIGLLHSLGIRLVVVYGARPQIEQNLADHHYEPVYHKHTRVTDNKTLELVKQSAGLLQLDITARLSMNLNNTPLQGANINVVSGNFIIAQPLGVDDGVDYCHSGKIRRIDEHAINRQLDNGAIVLIGPVAVSVTGESFNLAFEDVATQLAIKLQAEKLIGFCSTQGVQDKDGKILSEVFLNQAPELIKELEVKGDYYSGTVCFLRSAIKACRRGVRRSHLLSYQADGSLLQELFSRDGIGTQIVMESAEQIRRANINDIGGILELIRPLEQQGILVRRSREQLEREIDKFIIIERDNLTIACAALYPYPEEKIGEMACLAVNPKYRSSLRGEVLLNRIAEHAKQLGLEKLFVLTTRSIHWFQERGFEPAELSMLPIQKQVLYNYQRRSKILMLNLEPQPGFT</sequence>
<reference key="1">
    <citation type="journal article" date="2003" name="Nat. Biotechnol.">
        <title>The genome sequence of the entomopathogenic bacterium Photorhabdus luminescens.</title>
        <authorList>
            <person name="Duchaud E."/>
            <person name="Rusniok C."/>
            <person name="Frangeul L."/>
            <person name="Buchrieser C."/>
            <person name="Givaudan A."/>
            <person name="Taourit S."/>
            <person name="Bocs S."/>
            <person name="Boursaux-Eude C."/>
            <person name="Chandler M."/>
            <person name="Charles J.-F."/>
            <person name="Dassa E."/>
            <person name="Derose R."/>
            <person name="Derzelle S."/>
            <person name="Freyssinet G."/>
            <person name="Gaudriault S."/>
            <person name="Medigue C."/>
            <person name="Lanois A."/>
            <person name="Powell K."/>
            <person name="Siguier P."/>
            <person name="Vincent R."/>
            <person name="Wingate V."/>
            <person name="Zouine M."/>
            <person name="Glaser P."/>
            <person name="Boemare N."/>
            <person name="Danchin A."/>
            <person name="Kunst F."/>
        </authorList>
    </citation>
    <scope>NUCLEOTIDE SEQUENCE [LARGE SCALE GENOMIC DNA]</scope>
    <source>
        <strain>DSM 15139 / CIP 105565 / TT01</strain>
    </source>
</reference>
<proteinExistence type="inferred from homology"/>
<gene>
    <name evidence="1" type="primary">argA</name>
    <name type="ordered locus">plu0644</name>
</gene>
<protein>
    <recommendedName>
        <fullName evidence="1">Amino-acid acetyltransferase</fullName>
        <ecNumber evidence="1">2.3.1.1</ecNumber>
    </recommendedName>
    <alternativeName>
        <fullName evidence="1">N-acetylglutamate synthase</fullName>
        <shortName evidence="1">AGS</shortName>
        <shortName evidence="1">NAGS</shortName>
    </alternativeName>
</protein>
<feature type="chain" id="PRO_0000186797" description="Amino-acid acetyltransferase">
    <location>
        <begin position="1"/>
        <end position="448"/>
    </location>
</feature>
<feature type="domain" description="N-acetyltransferase" evidence="1">
    <location>
        <begin position="295"/>
        <end position="433"/>
    </location>
</feature>